<proteinExistence type="evidence at protein level"/>
<sequence length="1450" mass="163618">MISKRRRLDSEDKENLTEDASKTMPLSKLAKKSHNSHEVEENGSVFVKLLKASGLTLKTGENQNQLGVDQVIFQRKLFQALRKHPAYPKVIEEFVNGLESYTEDSESLRNCLLSCERLQDEEASMGTFYSKSLIKLLLGIDILQPAIIKMLFEKVPQFLFESENRDGINMARLIINQLKWLDRIVDGKDLTAQMMQLISVAPVNLQHDFITSLPEILGDSQHANVGKELGELLVQNTSLTVPILDVFSSLRLDPNFLSKIRQLVMGKLSSVRLEDFPVIVKFLLHSVTDTTSLEVIAELRENLNVQQFILPSRIQASQSKLKSKGLASSSGNQENSDKDCIVLVFDVIKSAIRYEKTISEAWFKAIERIESAAEHKALDVVMLLIIYSTSTQTKKGVEKLLRNKIQSDCIQEQLLDSAFSTHYLVLKDICPSILLLAQTLFHSQDQRIILFGSLLYKYAFKFFDTYCQQEVVGALVTHVCSGTEAEVDTALDVLLELIVLNASAMRLNAAFVKGILDYLENMSPQQIRKIFCILSTLAFSQQPGTSNHIQDDMHLVIRKQLSSTVFKYKLIGIIGAVTMAGIMAEDRSVPSNSSQRSANVSSEQRTQVTSLLQLVHSCTEHSPWASSLYYDEFANLIQERKLAPKTLEWVGQTIFNDFQDAFVVDFCAAPEGDFPFPVKALYGLEEYSTQDGIVINLLPLFYQECAKDASRATSQESSQRSMSSLCLASHFRLLRLCVARQHDGNLDEIDGLLDCPLFLPDLEPGEKLESMSAKDRSLMCSLTFLTFNWFREVVNAFCQQTSPEMKGKVLSRLKDLVELQGILEKYLAVIPDYVPPFASVDLDTLDMMPRSSSAVAAKNRNKGKTGGKKQKADSNKASCSDTLLTEDTSECDMAPSGRSHVDKESTGKEGKTFVSLQNYRAFFRELDIEVFSILHSGLVTKFILDTEMHTEATEVVQLGPAELLFLLEDLSQKLENMLTAPFAKRICCFKNKGRQNIGFSHLHQRSVQDIVHCVVQLLTPMCNHLENIHNFFQCLGAEHLSADDKARATAQEQHTMACCYQKLLQVLHALFAWKGFTHQSKHRLLHSALEVLSNRLKQMEQDQPLEELVSQSFSYLQNFHHSVPSFQCGLYLLRLLMALLEKSAVPNQKKEKLASLAKQLLCRAWPHGEKEKNPTFNDHLHDVLYIYLEHTDNVLKAIEEITGVGVPELVSAPKDAASSTFPTLTRHTFVIFFRVMMAELEKTVKGLQAGTAADSQQVHEEKLLYWNMAVRDFSILLNLMKVFDSYPVLHVCLKYGRRFVEAFLKQCMPLLDFSFRKHREDVLSLLQTLQLNTRLLHHLCGHSKIRQDTRLTKHVPLLKKSLELLVCRVKAMLVLNNCREAFWLGTLKNRDLQGEEIISQDPSSSESNAEDSEDGVTSHVSRNRATEDGEDEASDEQKDQDSDESDDSSS</sequence>
<protein>
    <recommendedName>
        <fullName>Fanconi anemia group D2 protein homolog</fullName>
        <shortName>Protein FACD2</shortName>
    </recommendedName>
</protein>
<dbReference type="EMBL" id="AK019136">
    <property type="protein sequence ID" value="BAB31563.1"/>
    <property type="molecule type" value="mRNA"/>
</dbReference>
<dbReference type="EMBL" id="CK634273">
    <property type="status" value="NOT_ANNOTATED_CDS"/>
    <property type="molecule type" value="mRNA"/>
</dbReference>
<dbReference type="EMBL" id="CN460982">
    <property type="status" value="NOT_ANNOTATED_CDS"/>
    <property type="molecule type" value="mRNA"/>
</dbReference>
<dbReference type="EMBL" id="BC042619">
    <property type="protein sequence ID" value="AAH42619.1"/>
    <property type="molecule type" value="mRNA"/>
</dbReference>
<dbReference type="CCDS" id="CCDS20426.1">
    <molecule id="Q80V62-1"/>
</dbReference>
<dbReference type="RefSeq" id="NP_001028416.2">
    <molecule id="Q80V62-1"/>
    <property type="nucleotide sequence ID" value="NM_001033244.3"/>
</dbReference>
<dbReference type="PDB" id="3S4W">
    <property type="method" value="X-ray"/>
    <property type="resolution" value="3.41 A"/>
    <property type="chains" value="B=33-1415"/>
</dbReference>
<dbReference type="PDBsum" id="3S4W"/>
<dbReference type="SMR" id="Q80V62"/>
<dbReference type="BioGRID" id="229254">
    <property type="interactions" value="1682"/>
</dbReference>
<dbReference type="FunCoup" id="Q80V62">
    <property type="interactions" value="3832"/>
</dbReference>
<dbReference type="IntAct" id="Q80V62">
    <property type="interactions" value="1"/>
</dbReference>
<dbReference type="MINT" id="Q80V62"/>
<dbReference type="STRING" id="10090.ENSMUSP00000045667"/>
<dbReference type="iPTMnet" id="Q80V62"/>
<dbReference type="PhosphoSitePlus" id="Q80V62"/>
<dbReference type="PaxDb" id="10090-ENSMUSP00000045667"/>
<dbReference type="PeptideAtlas" id="Q80V62"/>
<dbReference type="ProteomicsDB" id="275847">
    <molecule id="Q80V62-1"/>
</dbReference>
<dbReference type="ProteomicsDB" id="275848">
    <molecule id="Q80V62-2"/>
</dbReference>
<dbReference type="Pumba" id="Q80V62"/>
<dbReference type="Antibodypedia" id="10521">
    <property type="antibodies" value="647 antibodies from 39 providers"/>
</dbReference>
<dbReference type="Ensembl" id="ENSMUST00000036340.12">
    <molecule id="Q80V62-1"/>
    <property type="protein sequence ID" value="ENSMUSP00000045667.6"/>
    <property type="gene ID" value="ENSMUSG00000034023.17"/>
</dbReference>
<dbReference type="GeneID" id="211651"/>
<dbReference type="KEGG" id="mmu:211651"/>
<dbReference type="UCSC" id="uc009dgw.2">
    <molecule id="Q80V62-2"/>
    <property type="organism name" value="mouse"/>
</dbReference>
<dbReference type="UCSC" id="uc009dgx.2">
    <molecule id="Q80V62-1"/>
    <property type="organism name" value="mouse"/>
</dbReference>
<dbReference type="AGR" id="MGI:2448480"/>
<dbReference type="CTD" id="2177"/>
<dbReference type="MGI" id="MGI:2448480">
    <property type="gene designation" value="Fancd2"/>
</dbReference>
<dbReference type="VEuPathDB" id="HostDB:ENSMUSG00000034023"/>
<dbReference type="eggNOG" id="KOG4712">
    <property type="taxonomic scope" value="Eukaryota"/>
</dbReference>
<dbReference type="GeneTree" id="ENSGT00390000016970"/>
<dbReference type="HOGENOM" id="CLU_002068_1_0_1"/>
<dbReference type="InParanoid" id="Q80V62"/>
<dbReference type="OMA" id="QCIRGNT"/>
<dbReference type="OrthoDB" id="27031at2759"/>
<dbReference type="PhylomeDB" id="Q80V62"/>
<dbReference type="TreeFam" id="TF101106"/>
<dbReference type="Reactome" id="R-MMU-6783310">
    <property type="pathway name" value="Fanconi Anemia Pathway"/>
</dbReference>
<dbReference type="BioGRID-ORCS" id="211651">
    <property type="hits" value="20 hits in 115 CRISPR screens"/>
</dbReference>
<dbReference type="ChiTaRS" id="Fancd2">
    <property type="organism name" value="mouse"/>
</dbReference>
<dbReference type="EvolutionaryTrace" id="Q80V62"/>
<dbReference type="PRO" id="PR:Q80V62"/>
<dbReference type="Proteomes" id="UP000000589">
    <property type="component" value="Chromosome 6"/>
</dbReference>
<dbReference type="RNAct" id="Q80V62">
    <property type="molecule type" value="protein"/>
</dbReference>
<dbReference type="Bgee" id="ENSMUSG00000034023">
    <property type="expression patterns" value="Expressed in spermatocyte and 154 other cell types or tissues"/>
</dbReference>
<dbReference type="ExpressionAtlas" id="Q80V62">
    <property type="expression patterns" value="baseline and differential"/>
</dbReference>
<dbReference type="GO" id="GO:0000793">
    <property type="term" value="C:condensed chromosome"/>
    <property type="evidence" value="ECO:0000314"/>
    <property type="project" value="MGI"/>
</dbReference>
<dbReference type="GO" id="GO:0005829">
    <property type="term" value="C:cytosol"/>
    <property type="evidence" value="ECO:0007669"/>
    <property type="project" value="Ensembl"/>
</dbReference>
<dbReference type="GO" id="GO:1990391">
    <property type="term" value="C:DNA repair complex"/>
    <property type="evidence" value="ECO:0007669"/>
    <property type="project" value="Ensembl"/>
</dbReference>
<dbReference type="GO" id="GO:0016604">
    <property type="term" value="C:nuclear body"/>
    <property type="evidence" value="ECO:0007669"/>
    <property type="project" value="Ensembl"/>
</dbReference>
<dbReference type="GO" id="GO:0005730">
    <property type="term" value="C:nucleolus"/>
    <property type="evidence" value="ECO:0007669"/>
    <property type="project" value="Ensembl"/>
</dbReference>
<dbReference type="GO" id="GO:0005634">
    <property type="term" value="C:nucleus"/>
    <property type="evidence" value="ECO:0000314"/>
    <property type="project" value="MGI"/>
</dbReference>
<dbReference type="GO" id="GO:0070182">
    <property type="term" value="F:DNA polymerase binding"/>
    <property type="evidence" value="ECO:0007669"/>
    <property type="project" value="Ensembl"/>
</dbReference>
<dbReference type="GO" id="GO:0048854">
    <property type="term" value="P:brain morphogenesis"/>
    <property type="evidence" value="ECO:0000316"/>
    <property type="project" value="MGI"/>
</dbReference>
<dbReference type="GO" id="GO:0034599">
    <property type="term" value="P:cellular response to oxidative stress"/>
    <property type="evidence" value="ECO:0000316"/>
    <property type="project" value="MGI"/>
</dbReference>
<dbReference type="GO" id="GO:0006974">
    <property type="term" value="P:DNA damage response"/>
    <property type="evidence" value="ECO:0000315"/>
    <property type="project" value="MGI"/>
</dbReference>
<dbReference type="GO" id="GO:0006281">
    <property type="term" value="P:DNA repair"/>
    <property type="evidence" value="ECO:0007669"/>
    <property type="project" value="UniProtKB-KW"/>
</dbReference>
<dbReference type="GO" id="GO:0007276">
    <property type="term" value="P:gamete generation"/>
    <property type="evidence" value="ECO:0000315"/>
    <property type="project" value="MGI"/>
</dbReference>
<dbReference type="GO" id="GO:0007129">
    <property type="term" value="P:homologous chromosome pairing at meiosis"/>
    <property type="evidence" value="ECO:0000315"/>
    <property type="project" value="MGI"/>
</dbReference>
<dbReference type="GO" id="GO:0097150">
    <property type="term" value="P:neuronal stem cell population maintenance"/>
    <property type="evidence" value="ECO:0000316"/>
    <property type="project" value="MGI"/>
</dbReference>
<dbReference type="GO" id="GO:2000348">
    <property type="term" value="P:regulation of CD40 signaling pathway"/>
    <property type="evidence" value="ECO:0000315"/>
    <property type="project" value="MGI"/>
</dbReference>
<dbReference type="GO" id="GO:0050727">
    <property type="term" value="P:regulation of inflammatory response"/>
    <property type="evidence" value="ECO:0000315"/>
    <property type="project" value="MGI"/>
</dbReference>
<dbReference type="GO" id="GO:0045589">
    <property type="term" value="P:regulation of regulatory T cell differentiation"/>
    <property type="evidence" value="ECO:0000315"/>
    <property type="project" value="MGI"/>
</dbReference>
<dbReference type="GO" id="GO:0010332">
    <property type="term" value="P:response to gamma radiation"/>
    <property type="evidence" value="ECO:0007669"/>
    <property type="project" value="Ensembl"/>
</dbReference>
<dbReference type="CDD" id="cd11721">
    <property type="entry name" value="FANCD2"/>
    <property type="match status" value="1"/>
</dbReference>
<dbReference type="IDEAL" id="IID50340"/>
<dbReference type="InterPro" id="IPR029448">
    <property type="entry name" value="FANCD2"/>
</dbReference>
<dbReference type="PANTHER" id="PTHR32086">
    <property type="entry name" value="FANCONI ANEMIA GROUP D2 PROTEIN"/>
    <property type="match status" value="1"/>
</dbReference>
<dbReference type="PANTHER" id="PTHR32086:SF0">
    <property type="entry name" value="FANCONI ANEMIA GROUP D2 PROTEIN"/>
    <property type="match status" value="1"/>
</dbReference>
<dbReference type="Pfam" id="PF14631">
    <property type="entry name" value="FancD2"/>
    <property type="match status" value="1"/>
</dbReference>
<evidence type="ECO:0000250" key="1"/>
<evidence type="ECO:0000250" key="2">
    <source>
        <dbReference type="UniProtKB" id="Q68Y81"/>
    </source>
</evidence>
<evidence type="ECO:0000250" key="3">
    <source>
        <dbReference type="UniProtKB" id="Q9BXW9"/>
    </source>
</evidence>
<evidence type="ECO:0000256" key="4">
    <source>
        <dbReference type="SAM" id="MobiDB-lite"/>
    </source>
</evidence>
<evidence type="ECO:0000269" key="5">
    <source>
    </source>
</evidence>
<evidence type="ECO:0000303" key="6">
    <source>
    </source>
</evidence>
<evidence type="ECO:0000305" key="7"/>
<evidence type="ECO:0007829" key="8">
    <source>
        <dbReference type="PDB" id="3S4W"/>
    </source>
</evidence>
<organism>
    <name type="scientific">Mus musculus</name>
    <name type="common">Mouse</name>
    <dbReference type="NCBI Taxonomy" id="10090"/>
    <lineage>
        <taxon>Eukaryota</taxon>
        <taxon>Metazoa</taxon>
        <taxon>Chordata</taxon>
        <taxon>Craniata</taxon>
        <taxon>Vertebrata</taxon>
        <taxon>Euteleostomi</taxon>
        <taxon>Mammalia</taxon>
        <taxon>Eutheria</taxon>
        <taxon>Euarchontoglires</taxon>
        <taxon>Glires</taxon>
        <taxon>Rodentia</taxon>
        <taxon>Myomorpha</taxon>
        <taxon>Muroidea</taxon>
        <taxon>Muridae</taxon>
        <taxon>Murinae</taxon>
        <taxon>Mus</taxon>
        <taxon>Mus</taxon>
    </lineage>
</organism>
<reference key="1">
    <citation type="journal article" date="2005" name="Science">
        <title>The transcriptional landscape of the mammalian genome.</title>
        <authorList>
            <person name="Carninci P."/>
            <person name="Kasukawa T."/>
            <person name="Katayama S."/>
            <person name="Gough J."/>
            <person name="Frith M.C."/>
            <person name="Maeda N."/>
            <person name="Oyama R."/>
            <person name="Ravasi T."/>
            <person name="Lenhard B."/>
            <person name="Wells C."/>
            <person name="Kodzius R."/>
            <person name="Shimokawa K."/>
            <person name="Bajic V.B."/>
            <person name="Brenner S.E."/>
            <person name="Batalov S."/>
            <person name="Forrest A.R."/>
            <person name="Zavolan M."/>
            <person name="Davis M.J."/>
            <person name="Wilming L.G."/>
            <person name="Aidinis V."/>
            <person name="Allen J.E."/>
            <person name="Ambesi-Impiombato A."/>
            <person name="Apweiler R."/>
            <person name="Aturaliya R.N."/>
            <person name="Bailey T.L."/>
            <person name="Bansal M."/>
            <person name="Baxter L."/>
            <person name="Beisel K.W."/>
            <person name="Bersano T."/>
            <person name="Bono H."/>
            <person name="Chalk A.M."/>
            <person name="Chiu K.P."/>
            <person name="Choudhary V."/>
            <person name="Christoffels A."/>
            <person name="Clutterbuck D.R."/>
            <person name="Crowe M.L."/>
            <person name="Dalla E."/>
            <person name="Dalrymple B.P."/>
            <person name="de Bono B."/>
            <person name="Della Gatta G."/>
            <person name="di Bernardo D."/>
            <person name="Down T."/>
            <person name="Engstrom P."/>
            <person name="Fagiolini M."/>
            <person name="Faulkner G."/>
            <person name="Fletcher C.F."/>
            <person name="Fukushima T."/>
            <person name="Furuno M."/>
            <person name="Futaki S."/>
            <person name="Gariboldi M."/>
            <person name="Georgii-Hemming P."/>
            <person name="Gingeras T.R."/>
            <person name="Gojobori T."/>
            <person name="Green R.E."/>
            <person name="Gustincich S."/>
            <person name="Harbers M."/>
            <person name="Hayashi Y."/>
            <person name="Hensch T.K."/>
            <person name="Hirokawa N."/>
            <person name="Hill D."/>
            <person name="Huminiecki L."/>
            <person name="Iacono M."/>
            <person name="Ikeo K."/>
            <person name="Iwama A."/>
            <person name="Ishikawa T."/>
            <person name="Jakt M."/>
            <person name="Kanapin A."/>
            <person name="Katoh M."/>
            <person name="Kawasawa Y."/>
            <person name="Kelso J."/>
            <person name="Kitamura H."/>
            <person name="Kitano H."/>
            <person name="Kollias G."/>
            <person name="Krishnan S.P."/>
            <person name="Kruger A."/>
            <person name="Kummerfeld S.K."/>
            <person name="Kurochkin I.V."/>
            <person name="Lareau L.F."/>
            <person name="Lazarevic D."/>
            <person name="Lipovich L."/>
            <person name="Liu J."/>
            <person name="Liuni S."/>
            <person name="McWilliam S."/>
            <person name="Madan Babu M."/>
            <person name="Madera M."/>
            <person name="Marchionni L."/>
            <person name="Matsuda H."/>
            <person name="Matsuzawa S."/>
            <person name="Miki H."/>
            <person name="Mignone F."/>
            <person name="Miyake S."/>
            <person name="Morris K."/>
            <person name="Mottagui-Tabar S."/>
            <person name="Mulder N."/>
            <person name="Nakano N."/>
            <person name="Nakauchi H."/>
            <person name="Ng P."/>
            <person name="Nilsson R."/>
            <person name="Nishiguchi S."/>
            <person name="Nishikawa S."/>
            <person name="Nori F."/>
            <person name="Ohara O."/>
            <person name="Okazaki Y."/>
            <person name="Orlando V."/>
            <person name="Pang K.C."/>
            <person name="Pavan W.J."/>
            <person name="Pavesi G."/>
            <person name="Pesole G."/>
            <person name="Petrovsky N."/>
            <person name="Piazza S."/>
            <person name="Reed J."/>
            <person name="Reid J.F."/>
            <person name="Ring B.Z."/>
            <person name="Ringwald M."/>
            <person name="Rost B."/>
            <person name="Ruan Y."/>
            <person name="Salzberg S.L."/>
            <person name="Sandelin A."/>
            <person name="Schneider C."/>
            <person name="Schoenbach C."/>
            <person name="Sekiguchi K."/>
            <person name="Semple C.A."/>
            <person name="Seno S."/>
            <person name="Sessa L."/>
            <person name="Sheng Y."/>
            <person name="Shibata Y."/>
            <person name="Shimada H."/>
            <person name="Shimada K."/>
            <person name="Silva D."/>
            <person name="Sinclair B."/>
            <person name="Sperling S."/>
            <person name="Stupka E."/>
            <person name="Sugiura K."/>
            <person name="Sultana R."/>
            <person name="Takenaka Y."/>
            <person name="Taki K."/>
            <person name="Tammoja K."/>
            <person name="Tan S.L."/>
            <person name="Tang S."/>
            <person name="Taylor M.S."/>
            <person name="Tegner J."/>
            <person name="Teichmann S.A."/>
            <person name="Ueda H.R."/>
            <person name="van Nimwegen E."/>
            <person name="Verardo R."/>
            <person name="Wei C.L."/>
            <person name="Yagi K."/>
            <person name="Yamanishi H."/>
            <person name="Zabarovsky E."/>
            <person name="Zhu S."/>
            <person name="Zimmer A."/>
            <person name="Hide W."/>
            <person name="Bult C."/>
            <person name="Grimmond S.M."/>
            <person name="Teasdale R.D."/>
            <person name="Liu E.T."/>
            <person name="Brusic V."/>
            <person name="Quackenbush J."/>
            <person name="Wahlestedt C."/>
            <person name="Mattick J.S."/>
            <person name="Hume D.A."/>
            <person name="Kai C."/>
            <person name="Sasaki D."/>
            <person name="Tomaru Y."/>
            <person name="Fukuda S."/>
            <person name="Kanamori-Katayama M."/>
            <person name="Suzuki M."/>
            <person name="Aoki J."/>
            <person name="Arakawa T."/>
            <person name="Iida J."/>
            <person name="Imamura K."/>
            <person name="Itoh M."/>
            <person name="Kato T."/>
            <person name="Kawaji H."/>
            <person name="Kawagashira N."/>
            <person name="Kawashima T."/>
            <person name="Kojima M."/>
            <person name="Kondo S."/>
            <person name="Konno H."/>
            <person name="Nakano K."/>
            <person name="Ninomiya N."/>
            <person name="Nishio T."/>
            <person name="Okada M."/>
            <person name="Plessy C."/>
            <person name="Shibata K."/>
            <person name="Shiraki T."/>
            <person name="Suzuki S."/>
            <person name="Tagami M."/>
            <person name="Waki K."/>
            <person name="Watahiki A."/>
            <person name="Okamura-Oho Y."/>
            <person name="Suzuki H."/>
            <person name="Kawai J."/>
            <person name="Hayashizaki Y."/>
        </authorList>
    </citation>
    <scope>NUCLEOTIDE SEQUENCE [LARGE SCALE MRNA] (ISOFORM 2)</scope>
    <source>
        <strain>C57BL/6J</strain>
    </source>
</reference>
<reference key="2">
    <citation type="submission" date="2004-01" db="EMBL/GenBank/DDBJ databases">
        <authorList>
            <consortium name="The MGC Project Team"/>
        </authorList>
    </citation>
    <scope>NUCLEOTIDE SEQUENCE [LARGE SCALE MRNA] OF 1-422 (ISOFORM 1)</scope>
</reference>
<reference key="3">
    <citation type="journal article" date="2004" name="Genome Res.">
        <title>The status, quality, and expansion of the NIH full-length cDNA project: the Mammalian Gene Collection (MGC).</title>
        <authorList>
            <consortium name="The MGC Project Team"/>
        </authorList>
    </citation>
    <scope>NUCLEOTIDE SEQUENCE [LARGE SCALE MRNA] OF 341-1450 (ISOFORM 1)</scope>
    <source>
        <strain>FVB/N</strain>
        <tissue>Mammary tumor</tissue>
    </source>
</reference>
<reference key="4">
    <citation type="journal article" date="2003" name="Genes Dev.">
        <title>Epithelial cancer in Fanconi anemia complementation group D2 (Fancd2) knockout mice.</title>
        <authorList>
            <person name="Houghtaling S."/>
            <person name="Timmers C."/>
            <person name="Noll M."/>
            <person name="Finegold M.J."/>
            <person name="Jones S.N."/>
            <person name="Meyn M.S."/>
            <person name="Grompe M."/>
        </authorList>
    </citation>
    <scope>FUNCTION</scope>
    <scope>DISRUPTION PHENOTYPE</scope>
</reference>
<reference key="5">
    <citation type="journal article" date="2010" name="Cell">
        <title>A tissue-specific atlas of mouse protein phosphorylation and expression.</title>
        <authorList>
            <person name="Huttlin E.L."/>
            <person name="Jedrychowski M.P."/>
            <person name="Elias J.E."/>
            <person name="Goswami T."/>
            <person name="Rad R."/>
            <person name="Beausoleil S.A."/>
            <person name="Villen J."/>
            <person name="Haas W."/>
            <person name="Sowa M.E."/>
            <person name="Gygi S.P."/>
        </authorList>
    </citation>
    <scope>IDENTIFICATION BY MASS SPECTROMETRY [LARGE SCALE ANALYSIS]</scope>
    <source>
        <tissue>Spleen</tissue>
        <tissue>Testis</tissue>
    </source>
</reference>
<reference key="6">
    <citation type="journal article" date="2011" name="Science">
        <title>Structure of the FANCI-FANCD2 complex: insights into the Fanconi anemia DNA repair pathway.</title>
        <authorList>
            <person name="Joo W."/>
            <person name="Xu G."/>
            <person name="Persky N.S."/>
            <person name="Smogorzewska A."/>
            <person name="Rudge D.G."/>
            <person name="Buzovetsky O."/>
            <person name="Elledge S.J."/>
            <person name="Pavletich N.P."/>
        </authorList>
    </citation>
    <scope>X-RAY CRYSTALLOGRAPHY (3.41 ANGSTROMS) OF 33-1415</scope>
</reference>
<accession>Q80V62</accession>
<accession>Q9CWC7</accession>
<gene>
    <name type="primary">Fancd2</name>
</gene>
<name>FACD2_MOUSE</name>
<keyword id="KW-0002">3D-structure</keyword>
<keyword id="KW-0025">Alternative splicing</keyword>
<keyword id="KW-0131">Cell cycle</keyword>
<keyword id="KW-0217">Developmental protein</keyword>
<keyword id="KW-0227">DNA damage</keyword>
<keyword id="KW-0234">DNA repair</keyword>
<keyword id="KW-1017">Isopeptide bond</keyword>
<keyword id="KW-0539">Nucleus</keyword>
<keyword id="KW-0597">Phosphoprotein</keyword>
<keyword id="KW-1185">Reference proteome</keyword>
<keyword id="KW-0832">Ubl conjugation</keyword>
<comment type="function">
    <text evidence="2 3 5">Required for maintenance of chromosomal stability (PubMed:12893777). Promotes accurate and efficient pairing of homologs during meiosis (By similarity). Involved in the repair of DNA double-strand breaks, both by homologous recombination and single-strand annealing (By similarity). The FANCI-FANCD2 complex binds and scans double-stranded DNA (dsDNA) for DNA damage; this complex stalls at DNA junctions between double-stranded DNA and single-stranded DNA (By similarity). May participate in S phase and G2 phase checkpoint activation upon DNA damage (By similarity). Plays a role in preventing breakage and loss of missegregating chromatin at the end of cell division, particularly after replication stress (By similarity). Promotes BRCA2/FANCD1 loading onto damaged chromatin (By similarity). May also be involved in B-cell immunoglobulin isotype switching (By similarity).</text>
</comment>
<comment type="subunit">
    <text evidence="2 3">Homodimer; cannot be ubiquitinated and does not bind DNA (By similarity). Part of a FANCI-FANCD2 heterodimeric complex that binds and scans dsDNA for DNA damage (By similarity). Interacts directly with FANCE and FANCI (By similarity). Interacts with USP1 and MEN1 (By similarity). The ubiquitinated form specifically interacts with BRCA1 and BLM (By similarity). Both the nonubiquitinated and the monoubiquitinated forms interact with BRCA2; this interaction is mediated by phosphorylated FANCG and the complex also includes XCCR3 (By similarity). The ubiquitinated form specifically interacts with MTMR15/FAN1 (via UBZ-type zinc finger), leading to recruit MTMR15/FAN1 to sites of DNA damage (By similarity). Interacts with DCLRE1B/Apollo (By similarity). Interacts with POLN (By similarity). Interacts with UHRF1 and UHRF2; these interactions promote FANCD2 activation (By similarity).</text>
</comment>
<comment type="interaction">
    <interactant intactId="EBI-7268304">
        <id>Q80V62</id>
    </interactant>
    <interactant intactId="EBI-495621">
        <id>P27661</id>
        <label>H2ax</label>
    </interactant>
    <organismsDiffer>false</organismsDiffer>
    <experiments>2</experiments>
</comment>
<comment type="subcellular location">
    <subcellularLocation>
        <location evidence="3">Nucleus</location>
    </subcellularLocation>
    <text evidence="3">Concentrates in nuclear foci during S phase and upon genotoxic stress.</text>
</comment>
<comment type="alternative products">
    <event type="alternative splicing"/>
    <isoform>
        <id>Q80V62-1</id>
        <name>1</name>
        <sequence type="displayed"/>
    </isoform>
    <isoform>
        <id>Q80V62-2</id>
        <name>2</name>
        <sequence type="described" ref="VSP_013889 VSP_013890"/>
    </isoform>
</comment>
<comment type="PTM">
    <text evidence="2 3">Monoubiquitinated on Lys-559 during S phase and upon genotoxic stress by FANCL in complex with E2 ligases UBE2T or UBE2W (By similarity). Deubiquitinated by USP1 as cells enter G2/M, or once DNA repair is completed (By similarity). Monoubiquitination requires the joint intervention of the FANC core complex, including FANCA, FANCB, FANCC, FANCE, FANCF, FANCG, and FANCM, and proteins involved in cell cycle checkpoints and DNA repair, including RPA1, ATR, CHEK1 and BRCA1, and is mediated by FANCL/PHF9 (By similarity). Monoubiquitination prevents DNA release from the FANCI-FANCD2 complex (By similarity). FANCD2 is only ubiquitinated in the FANCI-FANCD2 complex and the monoubiquitination of FANCD2 is promoted by phosphorylation of FANCI (By similarity). Ubiquitination is required for binding to chromatin, interaction with BRCA1, BRCA2 and MTMR15/FAN1, DNA repair, and normal cell cycle progression (By similarity).</text>
</comment>
<comment type="PTM">
    <text evidence="3">Phosphorylated on several sites including Ser-220 and Ser-1399 in response to genotoxic stress by ATM and/or ATR.</text>
</comment>
<comment type="disruption phenotype">
    <text evidence="5">Mice display delayed pre- and postnatal development, defects in germ-cell development, and increase incidence of microphthalmia and tumors of epithelial cell origin.</text>
</comment>
<comment type="similarity">
    <text evidence="7">Belongs to the Fanconi anemia protein FANCD2 family.</text>
</comment>
<feature type="chain" id="PRO_0000087169" description="Fanconi anemia group D2 protein homolog">
    <location>
        <begin position="1"/>
        <end position="1450"/>
    </location>
</feature>
<feature type="region of interest" description="Interaction with FANCE" evidence="1">
    <location>
        <begin position="1"/>
        <end position="289"/>
    </location>
</feature>
<feature type="region of interest" description="Disordered" evidence="4">
    <location>
        <begin position="1"/>
        <end position="37"/>
    </location>
</feature>
<feature type="region of interest" description="Interaction with BRCA2" evidence="1">
    <location>
        <begin position="246"/>
        <end position="357"/>
    </location>
</feature>
<feature type="region of interest" description="Disordered" evidence="4">
    <location>
        <begin position="853"/>
        <end position="879"/>
    </location>
</feature>
<feature type="region of interest" description="Disordered" evidence="4">
    <location>
        <begin position="1398"/>
        <end position="1450"/>
    </location>
</feature>
<feature type="compositionally biased region" description="Basic and acidic residues" evidence="4">
    <location>
        <begin position="8"/>
        <end position="21"/>
    </location>
</feature>
<feature type="compositionally biased region" description="Basic residues" evidence="4">
    <location>
        <begin position="859"/>
        <end position="869"/>
    </location>
</feature>
<feature type="compositionally biased region" description="Acidic residues" evidence="4">
    <location>
        <begin position="1441"/>
        <end position="1450"/>
    </location>
</feature>
<feature type="modified residue" description="Phosphoserine" evidence="3">
    <location>
        <position position="220"/>
    </location>
</feature>
<feature type="modified residue" description="Phosphoserine" evidence="3">
    <location>
        <position position="714"/>
    </location>
</feature>
<feature type="modified residue" description="Phosphoserine" evidence="3">
    <location>
        <position position="1255"/>
    </location>
</feature>
<feature type="modified residue" description="Phosphoserine" evidence="3">
    <location>
        <position position="1404"/>
    </location>
</feature>
<feature type="modified residue" description="Phosphoserine" evidence="3">
    <location>
        <position position="1412"/>
    </location>
</feature>
<feature type="modified residue" description="Phosphothreonine" evidence="3">
    <location>
        <position position="1426"/>
    </location>
</feature>
<feature type="modified residue" description="Phosphoserine" evidence="3">
    <location>
        <position position="1434"/>
    </location>
</feature>
<feature type="cross-link" description="Glycyl lysine isopeptide (Lys-Gly) (interchain with G-Cter in ubiquitin)" evidence="3">
    <location>
        <position position="559"/>
    </location>
</feature>
<feature type="splice variant" id="VSP_013889" description="In isoform 2." evidence="6">
    <original>SMGTFY</original>
    <variation>RCGEEA</variation>
    <location>
        <begin position="124"/>
        <end position="129"/>
    </location>
</feature>
<feature type="splice variant" id="VSP_013890" description="In isoform 2." evidence="6">
    <location>
        <begin position="130"/>
        <end position="1450"/>
    </location>
</feature>
<feature type="helix" evidence="8">
    <location>
        <begin position="45"/>
        <end position="52"/>
    </location>
</feature>
<feature type="strand" evidence="8">
    <location>
        <begin position="65"/>
        <end position="68"/>
    </location>
</feature>
<feature type="helix" evidence="8">
    <location>
        <begin position="72"/>
        <end position="83"/>
    </location>
</feature>
<feature type="helix" evidence="8">
    <location>
        <begin position="87"/>
        <end position="101"/>
    </location>
</feature>
<feature type="helix" evidence="8">
    <location>
        <begin position="105"/>
        <end position="111"/>
    </location>
</feature>
<feature type="strand" evidence="8">
    <location>
        <begin position="112"/>
        <end position="114"/>
    </location>
</feature>
<feature type="helix" evidence="8">
    <location>
        <begin position="133"/>
        <end position="139"/>
    </location>
</feature>
<feature type="turn" evidence="8">
    <location>
        <begin position="141"/>
        <end position="143"/>
    </location>
</feature>
<feature type="helix" evidence="8">
    <location>
        <begin position="144"/>
        <end position="159"/>
    </location>
</feature>
<feature type="helix" evidence="8">
    <location>
        <begin position="170"/>
        <end position="175"/>
    </location>
</feature>
<feature type="helix" evidence="8">
    <location>
        <begin position="176"/>
        <end position="178"/>
    </location>
</feature>
<feature type="helix" evidence="8">
    <location>
        <begin position="187"/>
        <end position="200"/>
    </location>
</feature>
<feature type="turn" evidence="8">
    <location>
        <begin position="203"/>
        <end position="205"/>
    </location>
</feature>
<feature type="helix" evidence="8">
    <location>
        <begin position="206"/>
        <end position="211"/>
    </location>
</feature>
<feature type="helix" evidence="8">
    <location>
        <begin position="213"/>
        <end position="216"/>
    </location>
</feature>
<feature type="helix" evidence="8">
    <location>
        <begin position="219"/>
        <end position="221"/>
    </location>
</feature>
<feature type="helix" evidence="8">
    <location>
        <begin position="222"/>
        <end position="235"/>
    </location>
</feature>
<feature type="helix" evidence="8">
    <location>
        <begin position="240"/>
        <end position="249"/>
    </location>
</feature>
<feature type="helix" evidence="8">
    <location>
        <begin position="254"/>
        <end position="266"/>
    </location>
</feature>
<feature type="helix" evidence="8">
    <location>
        <begin position="275"/>
        <end position="285"/>
    </location>
</feature>
<feature type="helix" evidence="8">
    <location>
        <begin position="292"/>
        <end position="304"/>
    </location>
</feature>
<feature type="helix" evidence="8">
    <location>
        <begin position="336"/>
        <end position="354"/>
    </location>
</feature>
<feature type="helix" evidence="8">
    <location>
        <begin position="356"/>
        <end position="368"/>
    </location>
</feature>
<feature type="helix" evidence="8">
    <location>
        <begin position="369"/>
        <end position="371"/>
    </location>
</feature>
<feature type="helix" evidence="8">
    <location>
        <begin position="378"/>
        <end position="389"/>
    </location>
</feature>
<feature type="helix" evidence="8">
    <location>
        <begin position="391"/>
        <end position="405"/>
    </location>
</feature>
<feature type="turn" evidence="8">
    <location>
        <begin position="406"/>
        <end position="408"/>
    </location>
</feature>
<feature type="helix" evidence="8">
    <location>
        <begin position="412"/>
        <end position="426"/>
    </location>
</feature>
<feature type="helix" evidence="8">
    <location>
        <begin position="430"/>
        <end position="441"/>
    </location>
</feature>
<feature type="strand" evidence="8">
    <location>
        <begin position="443"/>
        <end position="445"/>
    </location>
</feature>
<feature type="helix" evidence="8">
    <location>
        <begin position="446"/>
        <end position="461"/>
    </location>
</feature>
<feature type="helix" evidence="8">
    <location>
        <begin position="465"/>
        <end position="481"/>
    </location>
</feature>
<feature type="helix" evidence="8">
    <location>
        <begin position="484"/>
        <end position="500"/>
    </location>
</feature>
<feature type="helix" evidence="8">
    <location>
        <begin position="502"/>
        <end position="507"/>
    </location>
</feature>
<feature type="helix" evidence="8">
    <location>
        <begin position="509"/>
        <end position="513"/>
    </location>
</feature>
<feature type="helix" evidence="8">
    <location>
        <begin position="514"/>
        <end position="521"/>
    </location>
</feature>
<feature type="helix" evidence="8">
    <location>
        <begin position="524"/>
        <end position="541"/>
    </location>
</feature>
<feature type="helix" evidence="8">
    <location>
        <begin position="548"/>
        <end position="561"/>
    </location>
</feature>
<feature type="helix" evidence="8">
    <location>
        <begin position="566"/>
        <end position="582"/>
    </location>
</feature>
<feature type="helix" evidence="8">
    <location>
        <begin position="603"/>
        <end position="619"/>
    </location>
</feature>
<feature type="strand" evidence="8">
    <location>
        <begin position="620"/>
        <end position="622"/>
    </location>
</feature>
<feature type="helix" evidence="8">
    <location>
        <begin position="623"/>
        <end position="639"/>
    </location>
</feature>
<feature type="helix" evidence="8">
    <location>
        <begin position="644"/>
        <end position="662"/>
    </location>
</feature>
<feature type="strand" evidence="8">
    <location>
        <begin position="679"/>
        <end position="681"/>
    </location>
</feature>
<feature type="strand" evidence="8">
    <location>
        <begin position="685"/>
        <end position="687"/>
    </location>
</feature>
<feature type="strand" evidence="8">
    <location>
        <begin position="689"/>
        <end position="692"/>
    </location>
</feature>
<feature type="helix" evidence="8">
    <location>
        <begin position="697"/>
        <end position="706"/>
    </location>
</feature>
<feature type="helix" evidence="8">
    <location>
        <begin position="727"/>
        <end position="742"/>
    </location>
</feature>
<feature type="turn" evidence="8">
    <location>
        <begin position="747"/>
        <end position="749"/>
    </location>
</feature>
<feature type="helix" evidence="8">
    <location>
        <begin position="750"/>
        <end position="752"/>
    </location>
</feature>
<feature type="strand" evidence="8">
    <location>
        <begin position="757"/>
        <end position="759"/>
    </location>
</feature>
<feature type="strand" evidence="8">
    <location>
        <begin position="765"/>
        <end position="768"/>
    </location>
</feature>
<feature type="helix" evidence="8">
    <location>
        <begin position="774"/>
        <end position="797"/>
    </location>
</feature>
<feature type="helix" evidence="8">
    <location>
        <begin position="803"/>
        <end position="827"/>
    </location>
</feature>
<feature type="helix" evidence="8">
    <location>
        <begin position="916"/>
        <end position="919"/>
    </location>
</feature>
<feature type="turn" evidence="8">
    <location>
        <begin position="920"/>
        <end position="922"/>
    </location>
</feature>
<feature type="helix" evidence="8">
    <location>
        <begin position="928"/>
        <end position="935"/>
    </location>
</feature>
<feature type="helix" evidence="8">
    <location>
        <begin position="960"/>
        <end position="978"/>
    </location>
</feature>
<feature type="turn" evidence="8">
    <location>
        <begin position="1001"/>
        <end position="1004"/>
    </location>
</feature>
<feature type="helix" evidence="8">
    <location>
        <begin position="1007"/>
        <end position="1034"/>
    </location>
</feature>
<feature type="helix" evidence="8">
    <location>
        <begin position="1050"/>
        <end position="1071"/>
    </location>
</feature>
<feature type="turn" evidence="8">
    <location>
        <begin position="1074"/>
        <end position="1077"/>
    </location>
</feature>
<feature type="helix" evidence="8">
    <location>
        <begin position="1082"/>
        <end position="1090"/>
    </location>
</feature>
<feature type="helix" evidence="8">
    <location>
        <begin position="1105"/>
        <end position="1117"/>
    </location>
</feature>
<feature type="helix" evidence="8">
    <location>
        <begin position="1118"/>
        <end position="1122"/>
    </location>
</feature>
<feature type="helix" evidence="8">
    <location>
        <begin position="1126"/>
        <end position="1140"/>
    </location>
</feature>
<feature type="helix" evidence="8">
    <location>
        <begin position="1149"/>
        <end position="1160"/>
    </location>
</feature>
<feature type="helix" evidence="8">
    <location>
        <begin position="1174"/>
        <end position="1190"/>
    </location>
</feature>
<feature type="helix" evidence="8">
    <location>
        <begin position="1194"/>
        <end position="1203"/>
    </location>
</feature>
<feature type="turn" evidence="8">
    <location>
        <begin position="1204"/>
        <end position="1206"/>
    </location>
</feature>
<feature type="helix" evidence="8">
    <location>
        <begin position="1207"/>
        <end position="1210"/>
    </location>
</feature>
<feature type="helix" evidence="8">
    <location>
        <begin position="1226"/>
        <end position="1244"/>
    </location>
</feature>
<feature type="helix" evidence="8">
    <location>
        <begin position="1254"/>
        <end position="1280"/>
    </location>
</feature>
<feature type="turn" evidence="8">
    <location>
        <begin position="1281"/>
        <end position="1283"/>
    </location>
</feature>
<feature type="helix" evidence="8">
    <location>
        <begin position="1287"/>
        <end position="1305"/>
    </location>
</feature>
<feature type="helix" evidence="8">
    <location>
        <begin position="1307"/>
        <end position="1314"/>
    </location>
</feature>
<feature type="turn" evidence="8">
    <location>
        <begin position="1315"/>
        <end position="1317"/>
    </location>
</feature>
<feature type="helix" evidence="8">
    <location>
        <begin position="1319"/>
        <end position="1340"/>
    </location>
</feature>
<feature type="helix" evidence="8">
    <location>
        <begin position="1344"/>
        <end position="1346"/>
    </location>
</feature>
<feature type="helix" evidence="8">
    <location>
        <begin position="1349"/>
        <end position="1352"/>
    </location>
</feature>
<feature type="helix" evidence="8">
    <location>
        <begin position="1355"/>
        <end position="1373"/>
    </location>
</feature>
<feature type="helix" evidence="8">
    <location>
        <begin position="1379"/>
        <end position="1387"/>
    </location>
</feature>